<evidence type="ECO:0000255" key="1">
    <source>
        <dbReference type="HAMAP-Rule" id="MF_01396"/>
    </source>
</evidence>
<comment type="function">
    <text evidence="1">F(1)F(0) ATP synthase produces ATP from ADP in the presence of a proton or sodium gradient. F-type ATPases consist of two structural domains, F(1) containing the extramembraneous catalytic core and F(0) containing the membrane proton channel, linked together by a central stalk and a peripheral stalk. During catalysis, ATP synthesis in the catalytic domain of F(1) is coupled via a rotary mechanism of the central stalk subunits to proton translocation.</text>
</comment>
<comment type="function">
    <text evidence="1">Key component of the F(0) channel; it plays a direct role in translocation across the membrane. A homomeric c-ring of between 10-14 subunits forms the central stalk rotor element with the F(1) delta and epsilon subunits.</text>
</comment>
<comment type="subunit">
    <text evidence="1">F-type ATPases have 2 components, F(1) - the catalytic core - and F(0) - the membrane proton channel. F(1) has five subunits: alpha(3), beta(3), gamma(1), delta(1), epsilon(1). F(0) has three main subunits: a(1), b(2) and c(10-14). The alpha and beta chains form an alternating ring which encloses part of the gamma chain. F(1) is attached to F(0) by a central stalk formed by the gamma and epsilon chains, while a peripheral stalk is formed by the delta and b chains.</text>
</comment>
<comment type="subcellular location">
    <subcellularLocation>
        <location evidence="1">Cell inner membrane</location>
        <topology evidence="1">Multi-pass membrane protein</topology>
    </subcellularLocation>
</comment>
<comment type="similarity">
    <text evidence="1">Belongs to the ATPase C chain family.</text>
</comment>
<gene>
    <name evidence="1" type="primary">atpE</name>
    <name type="ordered locus">Hac_1590</name>
</gene>
<proteinExistence type="inferred from homology"/>
<keyword id="KW-0066">ATP synthesis</keyword>
<keyword id="KW-0997">Cell inner membrane</keyword>
<keyword id="KW-1003">Cell membrane</keyword>
<keyword id="KW-0138">CF(0)</keyword>
<keyword id="KW-0375">Hydrogen ion transport</keyword>
<keyword id="KW-0406">Ion transport</keyword>
<keyword id="KW-0446">Lipid-binding</keyword>
<keyword id="KW-0472">Membrane</keyword>
<keyword id="KW-0812">Transmembrane</keyword>
<keyword id="KW-1133">Transmembrane helix</keyword>
<keyword id="KW-0813">Transport</keyword>
<name>ATPL_HELAH</name>
<accession>Q17VM5</accession>
<organism>
    <name type="scientific">Helicobacter acinonychis (strain Sheeba)</name>
    <dbReference type="NCBI Taxonomy" id="382638"/>
    <lineage>
        <taxon>Bacteria</taxon>
        <taxon>Pseudomonadati</taxon>
        <taxon>Campylobacterota</taxon>
        <taxon>Epsilonproteobacteria</taxon>
        <taxon>Campylobacterales</taxon>
        <taxon>Helicobacteraceae</taxon>
        <taxon>Helicobacter</taxon>
    </lineage>
</organism>
<sequence length="105" mass="10770">MKFLALFFLALVGVAFAYDGGMDGMDMIKSYSILGAMIGLGIAAFGGAIGMGNAAAATITGTARNPGVGGKLLTTMFVAMAMIEAQVIYTLVFAIIAIYSNPFLS</sequence>
<feature type="chain" id="PRO_1000184391" description="ATP synthase subunit c">
    <location>
        <begin position="1"/>
        <end position="105"/>
    </location>
</feature>
<feature type="transmembrane region" description="Helical" evidence="1">
    <location>
        <begin position="3"/>
        <end position="23"/>
    </location>
</feature>
<feature type="transmembrane region" description="Helical" evidence="1">
    <location>
        <begin position="32"/>
        <end position="52"/>
    </location>
</feature>
<feature type="transmembrane region" description="Helical" evidence="1">
    <location>
        <begin position="78"/>
        <end position="98"/>
    </location>
</feature>
<feature type="site" description="Reversibly protonated during proton transport" evidence="1">
    <location>
        <position position="84"/>
    </location>
</feature>
<protein>
    <recommendedName>
        <fullName evidence="1">ATP synthase subunit c</fullName>
    </recommendedName>
    <alternativeName>
        <fullName evidence="1">ATP synthase F(0) sector subunit c</fullName>
    </alternativeName>
    <alternativeName>
        <fullName evidence="1">F-type ATPase subunit c</fullName>
        <shortName evidence="1">F-ATPase subunit c</shortName>
    </alternativeName>
    <alternativeName>
        <fullName evidence="1">Lipid-binding protein</fullName>
    </alternativeName>
</protein>
<reference key="1">
    <citation type="journal article" date="2006" name="PLoS Genet.">
        <title>Who ate whom? Adaptive Helicobacter genomic changes that accompanied a host jump from early humans to large felines.</title>
        <authorList>
            <person name="Eppinger M."/>
            <person name="Baar C."/>
            <person name="Linz B."/>
            <person name="Raddatz G."/>
            <person name="Lanz C."/>
            <person name="Keller H."/>
            <person name="Morelli G."/>
            <person name="Gressmann H."/>
            <person name="Achtman M."/>
            <person name="Schuster S.C."/>
        </authorList>
    </citation>
    <scope>NUCLEOTIDE SEQUENCE [LARGE SCALE GENOMIC DNA]</scope>
    <source>
        <strain>Sheeba</strain>
    </source>
</reference>
<dbReference type="EMBL" id="AM260522">
    <property type="protein sequence ID" value="CAK00301.1"/>
    <property type="molecule type" value="Genomic_DNA"/>
</dbReference>
<dbReference type="RefSeq" id="WP_011578384.1">
    <property type="nucleotide sequence ID" value="NC_008229.1"/>
</dbReference>
<dbReference type="SMR" id="Q17VM5"/>
<dbReference type="STRING" id="382638.Hac_1590"/>
<dbReference type="GeneID" id="31758848"/>
<dbReference type="KEGG" id="hac:Hac_1590"/>
<dbReference type="eggNOG" id="COG0636">
    <property type="taxonomic scope" value="Bacteria"/>
</dbReference>
<dbReference type="HOGENOM" id="CLU_148047_0_1_7"/>
<dbReference type="OrthoDB" id="5339943at2"/>
<dbReference type="BioCyc" id="HACI382638:HAC_RS06735-MONOMER"/>
<dbReference type="Proteomes" id="UP000000775">
    <property type="component" value="Chromosome"/>
</dbReference>
<dbReference type="GO" id="GO:0005886">
    <property type="term" value="C:plasma membrane"/>
    <property type="evidence" value="ECO:0007669"/>
    <property type="project" value="UniProtKB-SubCell"/>
</dbReference>
<dbReference type="GO" id="GO:0045259">
    <property type="term" value="C:proton-transporting ATP synthase complex"/>
    <property type="evidence" value="ECO:0007669"/>
    <property type="project" value="UniProtKB-KW"/>
</dbReference>
<dbReference type="GO" id="GO:0033177">
    <property type="term" value="C:proton-transporting two-sector ATPase complex, proton-transporting domain"/>
    <property type="evidence" value="ECO:0007669"/>
    <property type="project" value="InterPro"/>
</dbReference>
<dbReference type="GO" id="GO:0008289">
    <property type="term" value="F:lipid binding"/>
    <property type="evidence" value="ECO:0007669"/>
    <property type="project" value="UniProtKB-KW"/>
</dbReference>
<dbReference type="GO" id="GO:0046933">
    <property type="term" value="F:proton-transporting ATP synthase activity, rotational mechanism"/>
    <property type="evidence" value="ECO:0007669"/>
    <property type="project" value="UniProtKB-UniRule"/>
</dbReference>
<dbReference type="CDD" id="cd18121">
    <property type="entry name" value="ATP-synt_Fo_c"/>
    <property type="match status" value="1"/>
</dbReference>
<dbReference type="Gene3D" id="1.20.20.10">
    <property type="entry name" value="F1F0 ATP synthase subunit C"/>
    <property type="match status" value="1"/>
</dbReference>
<dbReference type="HAMAP" id="MF_01396">
    <property type="entry name" value="ATP_synth_c_bact"/>
    <property type="match status" value="1"/>
</dbReference>
<dbReference type="InterPro" id="IPR000454">
    <property type="entry name" value="ATP_synth_F0_csu"/>
</dbReference>
<dbReference type="InterPro" id="IPR020537">
    <property type="entry name" value="ATP_synth_F0_csu_DDCD_BS"/>
</dbReference>
<dbReference type="InterPro" id="IPR038662">
    <property type="entry name" value="ATP_synth_F0_csu_sf"/>
</dbReference>
<dbReference type="InterPro" id="IPR002379">
    <property type="entry name" value="ATPase_proteolipid_c-like_dom"/>
</dbReference>
<dbReference type="InterPro" id="IPR035921">
    <property type="entry name" value="F/V-ATP_Csub_sf"/>
</dbReference>
<dbReference type="NCBIfam" id="NF006295">
    <property type="entry name" value="PRK08482.1"/>
    <property type="match status" value="1"/>
</dbReference>
<dbReference type="Pfam" id="PF00137">
    <property type="entry name" value="ATP-synt_C"/>
    <property type="match status" value="1"/>
</dbReference>
<dbReference type="PRINTS" id="PR00124">
    <property type="entry name" value="ATPASEC"/>
</dbReference>
<dbReference type="SUPFAM" id="SSF81333">
    <property type="entry name" value="F1F0 ATP synthase subunit C"/>
    <property type="match status" value="1"/>
</dbReference>
<dbReference type="PROSITE" id="PS00605">
    <property type="entry name" value="ATPASE_C"/>
    <property type="match status" value="1"/>
</dbReference>